<evidence type="ECO:0000255" key="1">
    <source>
        <dbReference type="HAMAP-Rule" id="MF_00176"/>
    </source>
</evidence>
<accession>B0S8Z4</accession>
<organism>
    <name type="scientific">Leptospira biflexa serovar Patoc (strain Patoc 1 / Ames)</name>
    <dbReference type="NCBI Taxonomy" id="355278"/>
    <lineage>
        <taxon>Bacteria</taxon>
        <taxon>Pseudomonadati</taxon>
        <taxon>Spirochaetota</taxon>
        <taxon>Spirochaetia</taxon>
        <taxon>Leptospirales</taxon>
        <taxon>Leptospiraceae</taxon>
        <taxon>Leptospira</taxon>
    </lineage>
</organism>
<protein>
    <recommendedName>
        <fullName evidence="1">Serine--tRNA ligase</fullName>
        <ecNumber evidence="1">6.1.1.11</ecNumber>
    </recommendedName>
    <alternativeName>
        <fullName evidence="1">Seryl-tRNA synthetase</fullName>
        <shortName evidence="1">SerRS</shortName>
    </alternativeName>
    <alternativeName>
        <fullName evidence="1">Seryl-tRNA(Ser/Sec) synthetase</fullName>
    </alternativeName>
</protein>
<keyword id="KW-0030">Aminoacyl-tRNA synthetase</keyword>
<keyword id="KW-0067">ATP-binding</keyword>
<keyword id="KW-0963">Cytoplasm</keyword>
<keyword id="KW-0436">Ligase</keyword>
<keyword id="KW-0547">Nucleotide-binding</keyword>
<keyword id="KW-0648">Protein biosynthesis</keyword>
<comment type="function">
    <text evidence="1">Catalyzes the attachment of serine to tRNA(Ser). Is also able to aminoacylate tRNA(Sec) with serine, to form the misacylated tRNA L-seryl-tRNA(Sec), which will be further converted into selenocysteinyl-tRNA(Sec).</text>
</comment>
<comment type="catalytic activity">
    <reaction evidence="1">
        <text>tRNA(Ser) + L-serine + ATP = L-seryl-tRNA(Ser) + AMP + diphosphate + H(+)</text>
        <dbReference type="Rhea" id="RHEA:12292"/>
        <dbReference type="Rhea" id="RHEA-COMP:9669"/>
        <dbReference type="Rhea" id="RHEA-COMP:9703"/>
        <dbReference type="ChEBI" id="CHEBI:15378"/>
        <dbReference type="ChEBI" id="CHEBI:30616"/>
        <dbReference type="ChEBI" id="CHEBI:33019"/>
        <dbReference type="ChEBI" id="CHEBI:33384"/>
        <dbReference type="ChEBI" id="CHEBI:78442"/>
        <dbReference type="ChEBI" id="CHEBI:78533"/>
        <dbReference type="ChEBI" id="CHEBI:456215"/>
        <dbReference type="EC" id="6.1.1.11"/>
    </reaction>
</comment>
<comment type="catalytic activity">
    <reaction evidence="1">
        <text>tRNA(Sec) + L-serine + ATP = L-seryl-tRNA(Sec) + AMP + diphosphate + H(+)</text>
        <dbReference type="Rhea" id="RHEA:42580"/>
        <dbReference type="Rhea" id="RHEA-COMP:9742"/>
        <dbReference type="Rhea" id="RHEA-COMP:10128"/>
        <dbReference type="ChEBI" id="CHEBI:15378"/>
        <dbReference type="ChEBI" id="CHEBI:30616"/>
        <dbReference type="ChEBI" id="CHEBI:33019"/>
        <dbReference type="ChEBI" id="CHEBI:33384"/>
        <dbReference type="ChEBI" id="CHEBI:78442"/>
        <dbReference type="ChEBI" id="CHEBI:78533"/>
        <dbReference type="ChEBI" id="CHEBI:456215"/>
        <dbReference type="EC" id="6.1.1.11"/>
    </reaction>
</comment>
<comment type="pathway">
    <text evidence="1">Aminoacyl-tRNA biosynthesis; selenocysteinyl-tRNA(Sec) biosynthesis; L-seryl-tRNA(Sec) from L-serine and tRNA(Sec): step 1/1.</text>
</comment>
<comment type="subunit">
    <text evidence="1">Homodimer. The tRNA molecule binds across the dimer.</text>
</comment>
<comment type="subcellular location">
    <subcellularLocation>
        <location evidence="1">Cytoplasm</location>
    </subcellularLocation>
</comment>
<comment type="domain">
    <text evidence="1">Consists of two distinct domains, a catalytic core and a N-terminal extension that is involved in tRNA binding.</text>
</comment>
<comment type="similarity">
    <text evidence="1">Belongs to the class-II aminoacyl-tRNA synthetase family. Type-1 seryl-tRNA synthetase subfamily.</text>
</comment>
<dbReference type="EC" id="6.1.1.11" evidence="1"/>
<dbReference type="EMBL" id="CP000777">
    <property type="protein sequence ID" value="ABZ95815.1"/>
    <property type="molecule type" value="Genomic_DNA"/>
</dbReference>
<dbReference type="RefSeq" id="WP_012390382.1">
    <property type="nucleotide sequence ID" value="NC_010842.1"/>
</dbReference>
<dbReference type="SMR" id="B0S8Z4"/>
<dbReference type="KEGG" id="lbf:LBF_3352"/>
<dbReference type="HOGENOM" id="CLU_023797_1_1_12"/>
<dbReference type="UniPathway" id="UPA00906">
    <property type="reaction ID" value="UER00895"/>
</dbReference>
<dbReference type="GO" id="GO:0005737">
    <property type="term" value="C:cytoplasm"/>
    <property type="evidence" value="ECO:0007669"/>
    <property type="project" value="UniProtKB-SubCell"/>
</dbReference>
<dbReference type="GO" id="GO:0005524">
    <property type="term" value="F:ATP binding"/>
    <property type="evidence" value="ECO:0007669"/>
    <property type="project" value="UniProtKB-UniRule"/>
</dbReference>
<dbReference type="GO" id="GO:0004828">
    <property type="term" value="F:serine-tRNA ligase activity"/>
    <property type="evidence" value="ECO:0007669"/>
    <property type="project" value="UniProtKB-UniRule"/>
</dbReference>
<dbReference type="GO" id="GO:0016260">
    <property type="term" value="P:selenocysteine biosynthetic process"/>
    <property type="evidence" value="ECO:0007669"/>
    <property type="project" value="UniProtKB-UniRule"/>
</dbReference>
<dbReference type="GO" id="GO:0006434">
    <property type="term" value="P:seryl-tRNA aminoacylation"/>
    <property type="evidence" value="ECO:0007669"/>
    <property type="project" value="UniProtKB-UniRule"/>
</dbReference>
<dbReference type="CDD" id="cd00770">
    <property type="entry name" value="SerRS_core"/>
    <property type="match status" value="1"/>
</dbReference>
<dbReference type="Gene3D" id="3.30.930.10">
    <property type="entry name" value="Bira Bifunctional Protein, Domain 2"/>
    <property type="match status" value="1"/>
</dbReference>
<dbReference type="Gene3D" id="1.10.287.40">
    <property type="entry name" value="Serine-tRNA synthetase, tRNA binding domain"/>
    <property type="match status" value="1"/>
</dbReference>
<dbReference type="HAMAP" id="MF_00176">
    <property type="entry name" value="Ser_tRNA_synth_type1"/>
    <property type="match status" value="1"/>
</dbReference>
<dbReference type="InterPro" id="IPR002314">
    <property type="entry name" value="aa-tRNA-synt_IIb"/>
</dbReference>
<dbReference type="InterPro" id="IPR006195">
    <property type="entry name" value="aa-tRNA-synth_II"/>
</dbReference>
<dbReference type="InterPro" id="IPR045864">
    <property type="entry name" value="aa-tRNA-synth_II/BPL/LPL"/>
</dbReference>
<dbReference type="InterPro" id="IPR002317">
    <property type="entry name" value="Ser-tRNA-ligase_type_1"/>
</dbReference>
<dbReference type="InterPro" id="IPR015866">
    <property type="entry name" value="Ser-tRNA-synth_1_N"/>
</dbReference>
<dbReference type="InterPro" id="IPR042103">
    <property type="entry name" value="SerRS_1_N_sf"/>
</dbReference>
<dbReference type="InterPro" id="IPR033729">
    <property type="entry name" value="SerRS_core"/>
</dbReference>
<dbReference type="InterPro" id="IPR010978">
    <property type="entry name" value="tRNA-bd_arm"/>
</dbReference>
<dbReference type="NCBIfam" id="TIGR00414">
    <property type="entry name" value="serS"/>
    <property type="match status" value="1"/>
</dbReference>
<dbReference type="PANTHER" id="PTHR43697:SF1">
    <property type="entry name" value="SERINE--TRNA LIGASE"/>
    <property type="match status" value="1"/>
</dbReference>
<dbReference type="PANTHER" id="PTHR43697">
    <property type="entry name" value="SERYL-TRNA SYNTHETASE"/>
    <property type="match status" value="1"/>
</dbReference>
<dbReference type="Pfam" id="PF02403">
    <property type="entry name" value="Seryl_tRNA_N"/>
    <property type="match status" value="1"/>
</dbReference>
<dbReference type="Pfam" id="PF00587">
    <property type="entry name" value="tRNA-synt_2b"/>
    <property type="match status" value="1"/>
</dbReference>
<dbReference type="PIRSF" id="PIRSF001529">
    <property type="entry name" value="Ser-tRNA-synth_IIa"/>
    <property type="match status" value="1"/>
</dbReference>
<dbReference type="PRINTS" id="PR00981">
    <property type="entry name" value="TRNASYNTHSER"/>
</dbReference>
<dbReference type="SUPFAM" id="SSF55681">
    <property type="entry name" value="Class II aaRS and biotin synthetases"/>
    <property type="match status" value="1"/>
</dbReference>
<dbReference type="SUPFAM" id="SSF46589">
    <property type="entry name" value="tRNA-binding arm"/>
    <property type="match status" value="1"/>
</dbReference>
<dbReference type="PROSITE" id="PS50862">
    <property type="entry name" value="AA_TRNA_LIGASE_II"/>
    <property type="match status" value="1"/>
</dbReference>
<name>SYS_LEPBA</name>
<gene>
    <name evidence="1" type="primary">serS</name>
    <name type="ordered locus">LBF_3352</name>
</gene>
<feature type="chain" id="PRO_1000098086" description="Serine--tRNA ligase">
    <location>
        <begin position="1"/>
        <end position="418"/>
    </location>
</feature>
<feature type="binding site" evidence="1">
    <location>
        <begin position="232"/>
        <end position="234"/>
    </location>
    <ligand>
        <name>L-serine</name>
        <dbReference type="ChEBI" id="CHEBI:33384"/>
    </ligand>
</feature>
<feature type="binding site" evidence="1">
    <location>
        <begin position="263"/>
        <end position="265"/>
    </location>
    <ligand>
        <name>ATP</name>
        <dbReference type="ChEBI" id="CHEBI:30616"/>
    </ligand>
</feature>
<feature type="binding site" evidence="1">
    <location>
        <position position="279"/>
    </location>
    <ligand>
        <name>ATP</name>
        <dbReference type="ChEBI" id="CHEBI:30616"/>
    </ligand>
</feature>
<feature type="binding site" evidence="1">
    <location>
        <position position="286"/>
    </location>
    <ligand>
        <name>L-serine</name>
        <dbReference type="ChEBI" id="CHEBI:33384"/>
    </ligand>
</feature>
<feature type="binding site" evidence="1">
    <location>
        <begin position="350"/>
        <end position="353"/>
    </location>
    <ligand>
        <name>ATP</name>
        <dbReference type="ChEBI" id="CHEBI:30616"/>
    </ligand>
</feature>
<feature type="binding site" evidence="1">
    <location>
        <position position="385"/>
    </location>
    <ligand>
        <name>L-serine</name>
        <dbReference type="ChEBI" id="CHEBI:33384"/>
    </ligand>
</feature>
<proteinExistence type="inferred from homology"/>
<sequence>MLDINRIVQNPEELLSTLQKRGVVSSDIEAKIKSVSEKQRILKLEVEELRAERNRVSKEIGIQKSQGKDITEISNSMKGVGDRIKSIEEELTKEEESLHELNLGLPNLLDPSVPEGKSEEDNVLIRQWGEIPKLSFEAKTHFDIGEKLGIFDFERGVKLSGARFYTYRGLGAKLERSLMNLMLDTHTSENGYEEMWVPVLVNDESMTATGQLPKFAEDFYRLEKDGLNLIPTAEVPLTNYYRDEIIQEKELPISVCAHTSCFRREAGSYGRDTRGLVRVHQFQKVELVKFVEPEKSGEAHEKMLQDAESILQKLKLPYRVMLLCSKDMSSASSKTYDIEVWMPGLGRFMEISSVSNFKDYQARRGKIRYKSKEGKNLLVHTLNGSGLAIGRTLAAVIENYQSEDGTFQIPDVLKPYIR</sequence>
<reference key="1">
    <citation type="journal article" date="2008" name="PLoS ONE">
        <title>Genome sequence of the saprophyte Leptospira biflexa provides insights into the evolution of Leptospira and the pathogenesis of leptospirosis.</title>
        <authorList>
            <person name="Picardeau M."/>
            <person name="Bulach D.M."/>
            <person name="Bouchier C."/>
            <person name="Zuerner R.L."/>
            <person name="Zidane N."/>
            <person name="Wilson P.J."/>
            <person name="Creno S."/>
            <person name="Kuczek E.S."/>
            <person name="Bommezzadri S."/>
            <person name="Davis J.C."/>
            <person name="McGrath A."/>
            <person name="Johnson M.J."/>
            <person name="Boursaux-Eude C."/>
            <person name="Seemann T."/>
            <person name="Rouy Z."/>
            <person name="Coppel R.L."/>
            <person name="Rood J.I."/>
            <person name="Lajus A."/>
            <person name="Davies J.K."/>
            <person name="Medigue C."/>
            <person name="Adler B."/>
        </authorList>
    </citation>
    <scope>NUCLEOTIDE SEQUENCE [LARGE SCALE GENOMIC DNA]</scope>
    <source>
        <strain>Patoc 1 / Ames</strain>
    </source>
</reference>